<organism>
    <name type="scientific">Sulfurisphaera tokodaii (strain DSM 16993 / JCM 10545 / NBRC 100140 / 7)</name>
    <name type="common">Sulfolobus tokodaii</name>
    <dbReference type="NCBI Taxonomy" id="273063"/>
    <lineage>
        <taxon>Archaea</taxon>
        <taxon>Thermoproteota</taxon>
        <taxon>Thermoprotei</taxon>
        <taxon>Sulfolobales</taxon>
        <taxon>Sulfolobaceae</taxon>
        <taxon>Sulfurisphaera</taxon>
    </lineage>
</organism>
<protein>
    <recommendedName>
        <fullName evidence="1">UPF0145 protein STK_10800</fullName>
    </recommendedName>
</protein>
<proteinExistence type="inferred from homology"/>
<reference key="1">
    <citation type="journal article" date="2001" name="DNA Res.">
        <title>Complete genome sequence of an aerobic thermoacidophilic Crenarchaeon, Sulfolobus tokodaii strain7.</title>
        <authorList>
            <person name="Kawarabayasi Y."/>
            <person name="Hino Y."/>
            <person name="Horikawa H."/>
            <person name="Jin-no K."/>
            <person name="Takahashi M."/>
            <person name="Sekine M."/>
            <person name="Baba S."/>
            <person name="Ankai A."/>
            <person name="Kosugi H."/>
            <person name="Hosoyama A."/>
            <person name="Fukui S."/>
            <person name="Nagai Y."/>
            <person name="Nishijima K."/>
            <person name="Otsuka R."/>
            <person name="Nakazawa H."/>
            <person name="Takamiya M."/>
            <person name="Kato Y."/>
            <person name="Yoshizawa T."/>
            <person name="Tanaka T."/>
            <person name="Kudoh Y."/>
            <person name="Yamazaki J."/>
            <person name="Kushida N."/>
            <person name="Oguchi A."/>
            <person name="Aoki K."/>
            <person name="Masuda S."/>
            <person name="Yanagii M."/>
            <person name="Nishimura M."/>
            <person name="Yamagishi A."/>
            <person name="Oshima T."/>
            <person name="Kikuchi H."/>
        </authorList>
    </citation>
    <scope>NUCLEOTIDE SEQUENCE [LARGE SCALE GENOMIC DNA]</scope>
    <source>
        <strain>DSM 16993 / JCM 10545 / NBRC 100140 / 7</strain>
    </source>
</reference>
<dbReference type="EMBL" id="BA000023">
    <property type="protein sequence ID" value="BAB66111.1"/>
    <property type="molecule type" value="Genomic_DNA"/>
</dbReference>
<dbReference type="RefSeq" id="WP_010979093.1">
    <property type="nucleotide sequence ID" value="NC_003106.2"/>
</dbReference>
<dbReference type="SMR" id="Q972Q3"/>
<dbReference type="STRING" id="273063.STK_10800"/>
<dbReference type="GeneID" id="1459065"/>
<dbReference type="KEGG" id="sto:STK_10800"/>
<dbReference type="PATRIC" id="fig|273063.9.peg.1217"/>
<dbReference type="eggNOG" id="arCOG02287">
    <property type="taxonomic scope" value="Archaea"/>
</dbReference>
<dbReference type="OrthoDB" id="59443at2157"/>
<dbReference type="Proteomes" id="UP000001015">
    <property type="component" value="Chromosome"/>
</dbReference>
<dbReference type="Gene3D" id="3.30.110.70">
    <property type="entry name" value="Hypothetical protein apc22750. Chain B"/>
    <property type="match status" value="1"/>
</dbReference>
<dbReference type="HAMAP" id="MF_00338">
    <property type="entry name" value="UPF0145"/>
    <property type="match status" value="1"/>
</dbReference>
<dbReference type="InterPro" id="IPR035439">
    <property type="entry name" value="UPF0145_dom_sf"/>
</dbReference>
<dbReference type="InterPro" id="IPR002765">
    <property type="entry name" value="UPF0145_YbjQ-like"/>
</dbReference>
<dbReference type="PANTHER" id="PTHR34068:SF2">
    <property type="entry name" value="UPF0145 PROTEIN SCO3412"/>
    <property type="match status" value="1"/>
</dbReference>
<dbReference type="PANTHER" id="PTHR34068">
    <property type="entry name" value="UPF0145 PROTEIN YBJQ"/>
    <property type="match status" value="1"/>
</dbReference>
<dbReference type="Pfam" id="PF01906">
    <property type="entry name" value="YbjQ_1"/>
    <property type="match status" value="1"/>
</dbReference>
<dbReference type="SUPFAM" id="SSF117782">
    <property type="entry name" value="YbjQ-like"/>
    <property type="match status" value="1"/>
</dbReference>
<accession>Q972Q3</accession>
<sequence length="114" mass="12377">MSFRESDILITTAQELPGYKIVEVKGVVIGITVRSRGLGGNIAASFRSLIGGEIKEYVEMAEQARMQALERMIERAKALGANAVISVRFDSNELAQNMDEIIAYGTAVVVTKSI</sequence>
<feature type="chain" id="PRO_0000138504" description="UPF0145 protein STK_10800">
    <location>
        <begin position="1"/>
        <end position="114"/>
    </location>
</feature>
<gene>
    <name type="ordered locus">STK_10800</name>
</gene>
<evidence type="ECO:0000255" key="1">
    <source>
        <dbReference type="HAMAP-Rule" id="MF_00338"/>
    </source>
</evidence>
<name>Y1080_SULTO</name>
<keyword id="KW-1185">Reference proteome</keyword>
<comment type="similarity">
    <text evidence="1">Belongs to the UPF0145 family.</text>
</comment>